<reference key="1">
    <citation type="submission" date="2008-04" db="EMBL/GenBank/DDBJ databases">
        <title>Complete sequence of Clostridium botulinum strain Eklund.</title>
        <authorList>
            <person name="Brinkac L.M."/>
            <person name="Brown J.L."/>
            <person name="Bruce D."/>
            <person name="Detter C."/>
            <person name="Munk C."/>
            <person name="Smith L.A."/>
            <person name="Smith T.J."/>
            <person name="Sutton G."/>
            <person name="Brettin T.S."/>
        </authorList>
    </citation>
    <scope>NUCLEOTIDE SEQUENCE [LARGE SCALE GENOMIC DNA]</scope>
    <source>
        <strain>Eklund 17B / Type B</strain>
    </source>
</reference>
<keyword id="KW-0067">ATP-binding</keyword>
<keyword id="KW-0963">Cytoplasm</keyword>
<keyword id="KW-0324">Glycolysis</keyword>
<keyword id="KW-0418">Kinase</keyword>
<keyword id="KW-0547">Nucleotide-binding</keyword>
<keyword id="KW-0808">Transferase</keyword>
<comment type="catalytic activity">
    <reaction evidence="1">
        <text>(2R)-3-phosphoglycerate + ATP = (2R)-3-phospho-glyceroyl phosphate + ADP</text>
        <dbReference type="Rhea" id="RHEA:14801"/>
        <dbReference type="ChEBI" id="CHEBI:30616"/>
        <dbReference type="ChEBI" id="CHEBI:57604"/>
        <dbReference type="ChEBI" id="CHEBI:58272"/>
        <dbReference type="ChEBI" id="CHEBI:456216"/>
        <dbReference type="EC" id="2.7.2.3"/>
    </reaction>
</comment>
<comment type="pathway">
    <text evidence="1">Carbohydrate degradation; glycolysis; pyruvate from D-glyceraldehyde 3-phosphate: step 2/5.</text>
</comment>
<comment type="subunit">
    <text evidence="1">Monomer.</text>
</comment>
<comment type="subcellular location">
    <subcellularLocation>
        <location evidence="1">Cytoplasm</location>
    </subcellularLocation>
</comment>
<comment type="similarity">
    <text evidence="1">Belongs to the phosphoglycerate kinase family.</text>
</comment>
<protein>
    <recommendedName>
        <fullName evidence="1">Phosphoglycerate kinase</fullName>
        <ecNumber evidence="1">2.7.2.3</ecNumber>
    </recommendedName>
</protein>
<name>PGK_CLOBB</name>
<sequence>MNFNKKTIEDIQVKGKKVLVRCDFNVPLKDGVITDENRLNGALPTIKYLVENGAKVILCSHMGKPKGEPKPELSLAPVAKRLSELLGKEIKFAPDNTVVGENAKAAVAEMKDGDVVLLENTRYRKEETKNGEEFSKELASLAEIFVNDAFGTAHRAHCSTVGVTDYIDTAVCGYLIQKELKFLGNAVETPEKPFVAILGGAKVSDKIAVINNLLDKVDTIIIGGGMAYTFLKAQGYEIGTSLVEEDRLDYAKEMIAKAEEKSVKFLLPVDHRVAAEFKDVEATVTNDQNIPTGNMGLDIGPKTETVYANAIKDAKTVIWNGPMGVFEFENFNKGTIAVAKAMADSNATTIIGGGDSAAAVNILGFGDKMTHISTGGGASLEFLEGKVLPGISALND</sequence>
<gene>
    <name evidence="1" type="primary">pgk</name>
    <name type="ordered locus">CLL_A3065</name>
</gene>
<dbReference type="EC" id="2.7.2.3" evidence="1"/>
<dbReference type="EMBL" id="CP001056">
    <property type="protein sequence ID" value="ACD23799.1"/>
    <property type="molecule type" value="Genomic_DNA"/>
</dbReference>
<dbReference type="SMR" id="B2TPX4"/>
<dbReference type="KEGG" id="cbk:CLL_A3065"/>
<dbReference type="HOGENOM" id="CLU_025427_0_2_9"/>
<dbReference type="UniPathway" id="UPA00109">
    <property type="reaction ID" value="UER00185"/>
</dbReference>
<dbReference type="Proteomes" id="UP000001195">
    <property type="component" value="Chromosome"/>
</dbReference>
<dbReference type="GO" id="GO:0005829">
    <property type="term" value="C:cytosol"/>
    <property type="evidence" value="ECO:0007669"/>
    <property type="project" value="TreeGrafter"/>
</dbReference>
<dbReference type="GO" id="GO:0043531">
    <property type="term" value="F:ADP binding"/>
    <property type="evidence" value="ECO:0007669"/>
    <property type="project" value="TreeGrafter"/>
</dbReference>
<dbReference type="GO" id="GO:0005524">
    <property type="term" value="F:ATP binding"/>
    <property type="evidence" value="ECO:0007669"/>
    <property type="project" value="UniProtKB-KW"/>
</dbReference>
<dbReference type="GO" id="GO:0004618">
    <property type="term" value="F:phosphoglycerate kinase activity"/>
    <property type="evidence" value="ECO:0007669"/>
    <property type="project" value="UniProtKB-UniRule"/>
</dbReference>
<dbReference type="GO" id="GO:0006094">
    <property type="term" value="P:gluconeogenesis"/>
    <property type="evidence" value="ECO:0007669"/>
    <property type="project" value="TreeGrafter"/>
</dbReference>
<dbReference type="GO" id="GO:0006096">
    <property type="term" value="P:glycolytic process"/>
    <property type="evidence" value="ECO:0007669"/>
    <property type="project" value="UniProtKB-UniRule"/>
</dbReference>
<dbReference type="CDD" id="cd00318">
    <property type="entry name" value="Phosphoglycerate_kinase"/>
    <property type="match status" value="1"/>
</dbReference>
<dbReference type="FunFam" id="3.40.50.1260:FF:000007">
    <property type="entry name" value="Phosphoglycerate kinase"/>
    <property type="match status" value="1"/>
</dbReference>
<dbReference type="FunFam" id="3.40.50.1260:FF:000008">
    <property type="entry name" value="Phosphoglycerate kinase"/>
    <property type="match status" value="1"/>
</dbReference>
<dbReference type="Gene3D" id="3.40.50.1260">
    <property type="entry name" value="Phosphoglycerate kinase, N-terminal domain"/>
    <property type="match status" value="2"/>
</dbReference>
<dbReference type="HAMAP" id="MF_00145">
    <property type="entry name" value="Phosphoglyc_kinase"/>
    <property type="match status" value="1"/>
</dbReference>
<dbReference type="InterPro" id="IPR001576">
    <property type="entry name" value="Phosphoglycerate_kinase"/>
</dbReference>
<dbReference type="InterPro" id="IPR015911">
    <property type="entry name" value="Phosphoglycerate_kinase_CS"/>
</dbReference>
<dbReference type="InterPro" id="IPR015824">
    <property type="entry name" value="Phosphoglycerate_kinase_N"/>
</dbReference>
<dbReference type="InterPro" id="IPR036043">
    <property type="entry name" value="Phosphoglycerate_kinase_sf"/>
</dbReference>
<dbReference type="PANTHER" id="PTHR11406">
    <property type="entry name" value="PHOSPHOGLYCERATE KINASE"/>
    <property type="match status" value="1"/>
</dbReference>
<dbReference type="PANTHER" id="PTHR11406:SF23">
    <property type="entry name" value="PHOSPHOGLYCERATE KINASE 1, CHLOROPLASTIC-RELATED"/>
    <property type="match status" value="1"/>
</dbReference>
<dbReference type="Pfam" id="PF00162">
    <property type="entry name" value="PGK"/>
    <property type="match status" value="1"/>
</dbReference>
<dbReference type="PIRSF" id="PIRSF000724">
    <property type="entry name" value="Pgk"/>
    <property type="match status" value="1"/>
</dbReference>
<dbReference type="PRINTS" id="PR00477">
    <property type="entry name" value="PHGLYCKINASE"/>
</dbReference>
<dbReference type="SUPFAM" id="SSF53748">
    <property type="entry name" value="Phosphoglycerate kinase"/>
    <property type="match status" value="1"/>
</dbReference>
<dbReference type="PROSITE" id="PS00111">
    <property type="entry name" value="PGLYCERATE_KINASE"/>
    <property type="match status" value="1"/>
</dbReference>
<organism>
    <name type="scientific">Clostridium botulinum (strain Eklund 17B / Type B)</name>
    <dbReference type="NCBI Taxonomy" id="935198"/>
    <lineage>
        <taxon>Bacteria</taxon>
        <taxon>Bacillati</taxon>
        <taxon>Bacillota</taxon>
        <taxon>Clostridia</taxon>
        <taxon>Eubacteriales</taxon>
        <taxon>Clostridiaceae</taxon>
        <taxon>Clostridium</taxon>
    </lineage>
</organism>
<accession>B2TPX4</accession>
<evidence type="ECO:0000255" key="1">
    <source>
        <dbReference type="HAMAP-Rule" id="MF_00145"/>
    </source>
</evidence>
<feature type="chain" id="PRO_1000096331" description="Phosphoglycerate kinase">
    <location>
        <begin position="1"/>
        <end position="396"/>
    </location>
</feature>
<feature type="binding site" evidence="1">
    <location>
        <begin position="23"/>
        <end position="25"/>
    </location>
    <ligand>
        <name>substrate</name>
    </ligand>
</feature>
<feature type="binding site" evidence="1">
    <location>
        <position position="38"/>
    </location>
    <ligand>
        <name>substrate</name>
    </ligand>
</feature>
<feature type="binding site" evidence="1">
    <location>
        <begin position="61"/>
        <end position="64"/>
    </location>
    <ligand>
        <name>substrate</name>
    </ligand>
</feature>
<feature type="binding site" evidence="1">
    <location>
        <position position="122"/>
    </location>
    <ligand>
        <name>substrate</name>
    </ligand>
</feature>
<feature type="binding site" evidence="1">
    <location>
        <position position="155"/>
    </location>
    <ligand>
        <name>substrate</name>
    </ligand>
</feature>
<feature type="binding site" evidence="1">
    <location>
        <position position="206"/>
    </location>
    <ligand>
        <name>ATP</name>
        <dbReference type="ChEBI" id="CHEBI:30616"/>
    </ligand>
</feature>
<feature type="binding site" evidence="1">
    <location>
        <position position="296"/>
    </location>
    <ligand>
        <name>ATP</name>
        <dbReference type="ChEBI" id="CHEBI:30616"/>
    </ligand>
</feature>
<feature type="binding site" evidence="1">
    <location>
        <position position="327"/>
    </location>
    <ligand>
        <name>ATP</name>
        <dbReference type="ChEBI" id="CHEBI:30616"/>
    </ligand>
</feature>
<feature type="binding site" evidence="1">
    <location>
        <begin position="353"/>
        <end position="356"/>
    </location>
    <ligand>
        <name>ATP</name>
        <dbReference type="ChEBI" id="CHEBI:30616"/>
    </ligand>
</feature>
<proteinExistence type="inferred from homology"/>